<evidence type="ECO:0000250" key="1"/>
<evidence type="ECO:0000255" key="2">
    <source>
        <dbReference type="PROSITE-ProRule" id="PRU00978"/>
    </source>
</evidence>
<evidence type="ECO:0000256" key="3">
    <source>
        <dbReference type="SAM" id="MobiDB-lite"/>
    </source>
</evidence>
<evidence type="ECO:0000269" key="4">
    <source>
    </source>
</evidence>
<evidence type="ECO:0000305" key="5"/>
<gene>
    <name type="primary">FOS</name>
</gene>
<keyword id="KW-0963">Cytoplasm</keyword>
<keyword id="KW-0238">DNA-binding</keyword>
<keyword id="KW-0256">Endoplasmic reticulum</keyword>
<keyword id="KW-0539">Nucleus</keyword>
<keyword id="KW-0597">Phosphoprotein</keyword>
<keyword id="KW-0656">Proto-oncogene</keyword>
<keyword id="KW-1185">Reference proteome</keyword>
<accession>P11939</accession>
<sequence length="367" mass="39005">MMYQGFAGEYEAPSSRCSSASPAGDSLTYYPSPADSFSSMGSPVNSQDFCTDLAVSSANFVPTVTAISTSPDLQWLVQPTLISSVAPSQNRGHPYGVPAPAPPAAYSRPAVLKAPGGRGQSIGRRGKVEQLSPEEEEKRRIRRERNKMAAAKCRNRRRELTDTLQAETDQLEEEKSALQAEIANLLKEKEKLEFILAAHRPACKMPEELRFSEELAAATALDLGAPSPAAAEEAFALPLMTEAPPAVPPKEPSGSGLELKAEPFDELLFSAGPREASRSVPDMDLPGASSFYASDWEPLGAGSGGELEPLCTPVVTCTPCPSTYTSTFVFTYPEADAFPSCAAAHRKGSSSNEPSSDSLSSPTLLAL</sequence>
<proteinExistence type="evidence at protein level"/>
<comment type="function">
    <text evidence="1">Nuclear phosphoprotein which forms a tight but non-covalently linked complex with the JUN/AP-1 transcription factor. FOS has a critical function in regulating the development of cells destined to form and maintain the skeleton. It is thought to have an important role in signal transduction, cell proliferation and differentiation. In growing cells, may activate phospholipid synthesis (By similarity).</text>
</comment>
<comment type="subunit">
    <text evidence="4">Heterodimer. Interacts with MAFB.</text>
</comment>
<comment type="subcellular location">
    <subcellularLocation>
        <location>Nucleus</location>
    </subcellularLocation>
    <subcellularLocation>
        <location evidence="1">Endoplasmic reticulum</location>
    </subcellularLocation>
    <subcellularLocation>
        <location evidence="1">Cytoplasm</location>
        <location evidence="1">Cytosol</location>
    </subcellularLocation>
    <text evidence="1">In quiescent cells, may be present in very small amounts in the cytosol. Following induction of cell growth, first localizes to the endoplasmic reticulum and later to the nucleus (By similarity).</text>
</comment>
<comment type="induction">
    <text>Expression increases upon a variety of stimuli, including growth factors, cytokines, neurotransmitters, polypeptide hormones, stress and cell injury.</text>
</comment>
<comment type="PTM">
    <text evidence="1">May be Tyr-phosphorylated in quiescent cells and dephosphorylated upon cell growth induction.</text>
</comment>
<comment type="similarity">
    <text evidence="5">Belongs to the bZIP family. Fos subfamily.</text>
</comment>
<organism>
    <name type="scientific">Gallus gallus</name>
    <name type="common">Chicken</name>
    <dbReference type="NCBI Taxonomy" id="9031"/>
    <lineage>
        <taxon>Eukaryota</taxon>
        <taxon>Metazoa</taxon>
        <taxon>Chordata</taxon>
        <taxon>Craniata</taxon>
        <taxon>Vertebrata</taxon>
        <taxon>Euteleostomi</taxon>
        <taxon>Archelosauria</taxon>
        <taxon>Archosauria</taxon>
        <taxon>Dinosauria</taxon>
        <taxon>Saurischia</taxon>
        <taxon>Theropoda</taxon>
        <taxon>Coelurosauria</taxon>
        <taxon>Aves</taxon>
        <taxon>Neognathae</taxon>
        <taxon>Galloanserae</taxon>
        <taxon>Galliformes</taxon>
        <taxon>Phasianidae</taxon>
        <taxon>Phasianinae</taxon>
        <taxon>Gallus</taxon>
    </lineage>
</organism>
<feature type="chain" id="PRO_0000076471" description="Protein c-Fos">
    <location>
        <begin position="1"/>
        <end position="367"/>
    </location>
</feature>
<feature type="domain" description="bZIP" evidence="2">
    <location>
        <begin position="136"/>
        <end position="199"/>
    </location>
</feature>
<feature type="region of interest" description="Disordered" evidence="3">
    <location>
        <begin position="1"/>
        <end position="25"/>
    </location>
</feature>
<feature type="region of interest" description="Disordered" evidence="3">
    <location>
        <begin position="114"/>
        <end position="138"/>
    </location>
</feature>
<feature type="region of interest" description="Basic motif; required for the activation of phospholipid synthesis" evidence="2">
    <location>
        <begin position="138"/>
        <end position="158"/>
    </location>
</feature>
<feature type="region of interest" description="Leucine-zipper" evidence="2">
    <location>
        <begin position="164"/>
        <end position="192"/>
    </location>
</feature>
<feature type="region of interest" description="Disordered" evidence="3">
    <location>
        <begin position="343"/>
        <end position="367"/>
    </location>
</feature>
<feature type="compositionally biased region" description="Low complexity" evidence="3">
    <location>
        <begin position="12"/>
        <end position="25"/>
    </location>
</feature>
<feature type="compositionally biased region" description="Low complexity" evidence="3">
    <location>
        <begin position="349"/>
        <end position="361"/>
    </location>
</feature>
<feature type="modified residue" description="Phosphotyrosine; by SRC" evidence="1">
    <location>
        <position position="10"/>
    </location>
</feature>
<feature type="modified residue" description="Phosphotyrosine; by SRC" evidence="1">
    <location>
        <position position="30"/>
    </location>
</feature>
<reference key="1">
    <citation type="journal article" date="1987" name="Oncogene">
        <title>Isolation and structural analysis of a biologically active chicken c-fos cDNA: identification of evolutionarily conserved domains in fos protein.</title>
        <authorList>
            <person name="Moelders H."/>
            <person name="Jenuwein T."/>
            <person name="Adamkiewicz J."/>
            <person name="Mueller R."/>
        </authorList>
    </citation>
    <scope>NUCLEOTIDE SEQUENCE [MRNA]</scope>
</reference>
<reference key="2">
    <citation type="journal article" date="1987" name="J. Virol.">
        <title>The chicken c-fos gene: cloning and nucleotide sequence analysis.</title>
        <authorList>
            <person name="Fujiwara K.T."/>
            <person name="Ashida K."/>
            <person name="Nishina H."/>
            <person name="Iba H."/>
            <person name="Miyajima N."/>
            <person name="Nishizawa M."/>
            <person name="Kawai S."/>
        </authorList>
    </citation>
    <scope>NUCLEOTIDE SEQUENCE [GENOMIC DNA]</scope>
</reference>
<reference key="3">
    <citation type="journal article" date="1994" name="Mol. Cell. Biol.">
        <title>MafB,a new Maf family transcription activator that can associate with Maf and Fos but not with Jun.</title>
        <authorList>
            <person name="Kataoka K."/>
            <person name="Fujiwara K.T."/>
            <person name="Noda M."/>
            <person name="Nishizawa M."/>
        </authorList>
    </citation>
    <scope>INTERACTION WITH MAFB</scope>
</reference>
<name>FOS_CHICK</name>
<protein>
    <recommendedName>
        <fullName evidence="5">Protein c-Fos</fullName>
    </recommendedName>
    <alternativeName>
        <fullName>Cellular oncogene fos</fullName>
    </alternativeName>
    <alternativeName>
        <fullName evidence="5">Transcription factor AP-1 subunit c-Fos</fullName>
    </alternativeName>
</protein>
<dbReference type="EMBL" id="M37000">
    <property type="protein sequence ID" value="AAA48670.1"/>
    <property type="molecule type" value="mRNA"/>
</dbReference>
<dbReference type="EMBL" id="M18043">
    <property type="protein sequence ID" value="AAA76823.1"/>
    <property type="molecule type" value="Genomic_DNA"/>
</dbReference>
<dbReference type="PIR" id="A28368">
    <property type="entry name" value="TVCHFS"/>
</dbReference>
<dbReference type="RefSeq" id="NP_990839.1">
    <property type="nucleotide sequence ID" value="NM_205508.1"/>
</dbReference>
<dbReference type="SMR" id="P11939"/>
<dbReference type="FunCoup" id="P11939">
    <property type="interactions" value="380"/>
</dbReference>
<dbReference type="STRING" id="9031.ENSGALP00000041340"/>
<dbReference type="Ensembl" id="ENSGALT00010014790.1">
    <property type="protein sequence ID" value="ENSGALP00010008720.1"/>
    <property type="gene ID" value="ENSGALG00010006212.1"/>
</dbReference>
<dbReference type="GeneID" id="396512"/>
<dbReference type="KEGG" id="gga:396512"/>
<dbReference type="CTD" id="2353"/>
<dbReference type="VEuPathDB" id="HostDB:geneid_396512"/>
<dbReference type="GeneTree" id="ENSGT00940000159276"/>
<dbReference type="InParanoid" id="P11939"/>
<dbReference type="OMA" id="NRTHPYG"/>
<dbReference type="OrthoDB" id="5866312at2759"/>
<dbReference type="PhylomeDB" id="P11939"/>
<dbReference type="Reactome" id="R-GGA-2559580">
    <property type="pathway name" value="Oxidative Stress Induced Senescence"/>
</dbReference>
<dbReference type="Reactome" id="R-GGA-2871796">
    <property type="pathway name" value="FCERI mediated MAPK activation"/>
</dbReference>
<dbReference type="Reactome" id="R-GGA-450341">
    <property type="pathway name" value="Activation of the AP-1 family of transcription factors"/>
</dbReference>
<dbReference type="Reactome" id="R-GGA-9018519">
    <property type="pathway name" value="Estrogen-dependent gene expression"/>
</dbReference>
<dbReference type="PRO" id="PR:P11939"/>
<dbReference type="Proteomes" id="UP000000539">
    <property type="component" value="Chromosome 5"/>
</dbReference>
<dbReference type="Bgee" id="ENSGALG00000028037">
    <property type="expression patterns" value="Expressed in spermatocyte and 13 other cell types or tissues"/>
</dbReference>
<dbReference type="GO" id="GO:0005829">
    <property type="term" value="C:cytosol"/>
    <property type="evidence" value="ECO:0007669"/>
    <property type="project" value="UniProtKB-SubCell"/>
</dbReference>
<dbReference type="GO" id="GO:0005783">
    <property type="term" value="C:endoplasmic reticulum"/>
    <property type="evidence" value="ECO:0007669"/>
    <property type="project" value="UniProtKB-SubCell"/>
</dbReference>
<dbReference type="GO" id="GO:0005654">
    <property type="term" value="C:nucleoplasm"/>
    <property type="evidence" value="ECO:0007669"/>
    <property type="project" value="Ensembl"/>
</dbReference>
<dbReference type="GO" id="GO:0005634">
    <property type="term" value="C:nucleus"/>
    <property type="evidence" value="ECO:0000318"/>
    <property type="project" value="GO_Central"/>
</dbReference>
<dbReference type="GO" id="GO:0032993">
    <property type="term" value="C:protein-DNA complex"/>
    <property type="evidence" value="ECO:0007669"/>
    <property type="project" value="Ensembl"/>
</dbReference>
<dbReference type="GO" id="GO:0035976">
    <property type="term" value="C:transcription factor AP-1 complex"/>
    <property type="evidence" value="ECO:0007669"/>
    <property type="project" value="Ensembl"/>
</dbReference>
<dbReference type="GO" id="GO:0003682">
    <property type="term" value="F:chromatin binding"/>
    <property type="evidence" value="ECO:0007669"/>
    <property type="project" value="Ensembl"/>
</dbReference>
<dbReference type="GO" id="GO:0001228">
    <property type="term" value="F:DNA-binding transcription activator activity, RNA polymerase II-specific"/>
    <property type="evidence" value="ECO:0007669"/>
    <property type="project" value="Ensembl"/>
</dbReference>
<dbReference type="GO" id="GO:0000981">
    <property type="term" value="F:DNA-binding transcription factor activity, RNA polymerase II-specific"/>
    <property type="evidence" value="ECO:0000318"/>
    <property type="project" value="GO_Central"/>
</dbReference>
<dbReference type="GO" id="GO:0042802">
    <property type="term" value="F:identical protein binding"/>
    <property type="evidence" value="ECO:0007669"/>
    <property type="project" value="Ensembl"/>
</dbReference>
<dbReference type="GO" id="GO:0070412">
    <property type="term" value="F:R-SMAD binding"/>
    <property type="evidence" value="ECO:0007669"/>
    <property type="project" value="Ensembl"/>
</dbReference>
<dbReference type="GO" id="GO:0000978">
    <property type="term" value="F:RNA polymerase II cis-regulatory region sequence-specific DNA binding"/>
    <property type="evidence" value="ECO:0000318"/>
    <property type="project" value="GO_Central"/>
</dbReference>
<dbReference type="GO" id="GO:0000979">
    <property type="term" value="F:RNA polymerase II core promoter sequence-specific DNA binding"/>
    <property type="evidence" value="ECO:0007669"/>
    <property type="project" value="Ensembl"/>
</dbReference>
<dbReference type="GO" id="GO:0061629">
    <property type="term" value="F:RNA polymerase II-specific DNA-binding transcription factor binding"/>
    <property type="evidence" value="ECO:0007669"/>
    <property type="project" value="Ensembl"/>
</dbReference>
<dbReference type="GO" id="GO:0001221">
    <property type="term" value="F:transcription coregulator binding"/>
    <property type="evidence" value="ECO:0007669"/>
    <property type="project" value="Ensembl"/>
</dbReference>
<dbReference type="GO" id="GO:0071277">
    <property type="term" value="P:cellular response to calcium ion"/>
    <property type="evidence" value="ECO:0007669"/>
    <property type="project" value="Ensembl"/>
</dbReference>
<dbReference type="GO" id="GO:0034614">
    <property type="term" value="P:cellular response to reactive oxygen species"/>
    <property type="evidence" value="ECO:0007669"/>
    <property type="project" value="Ensembl"/>
</dbReference>
<dbReference type="GO" id="GO:0007399">
    <property type="term" value="P:nervous system development"/>
    <property type="evidence" value="ECO:0007669"/>
    <property type="project" value="Ensembl"/>
</dbReference>
<dbReference type="GO" id="GO:0030316">
    <property type="term" value="P:osteoclast differentiation"/>
    <property type="evidence" value="ECO:0007669"/>
    <property type="project" value="Ensembl"/>
</dbReference>
<dbReference type="GO" id="GO:1902895">
    <property type="term" value="P:positive regulation of miRNA transcription"/>
    <property type="evidence" value="ECO:0007669"/>
    <property type="project" value="Ensembl"/>
</dbReference>
<dbReference type="GO" id="GO:0045672">
    <property type="term" value="P:positive regulation of osteoclast differentiation"/>
    <property type="evidence" value="ECO:0007669"/>
    <property type="project" value="Ensembl"/>
</dbReference>
<dbReference type="GO" id="GO:0006357">
    <property type="term" value="P:regulation of transcription by RNA polymerase II"/>
    <property type="evidence" value="ECO:0000318"/>
    <property type="project" value="GO_Central"/>
</dbReference>
<dbReference type="GO" id="GO:0035994">
    <property type="term" value="P:response to muscle stretch"/>
    <property type="evidence" value="ECO:0007669"/>
    <property type="project" value="Ensembl"/>
</dbReference>
<dbReference type="GO" id="GO:0009410">
    <property type="term" value="P:response to xenobiotic stimulus"/>
    <property type="evidence" value="ECO:0007669"/>
    <property type="project" value="Ensembl"/>
</dbReference>
<dbReference type="GO" id="GO:0035914">
    <property type="term" value="P:skeletal muscle cell differentiation"/>
    <property type="evidence" value="ECO:0007669"/>
    <property type="project" value="Ensembl"/>
</dbReference>
<dbReference type="GO" id="GO:0060395">
    <property type="term" value="P:SMAD protein signal transduction"/>
    <property type="evidence" value="ECO:0007669"/>
    <property type="project" value="Ensembl"/>
</dbReference>
<dbReference type="GO" id="GO:0006366">
    <property type="term" value="P:transcription by RNA polymerase II"/>
    <property type="evidence" value="ECO:0007669"/>
    <property type="project" value="Ensembl"/>
</dbReference>
<dbReference type="GO" id="GO:0007179">
    <property type="term" value="P:transforming growth factor beta receptor signaling pathway"/>
    <property type="evidence" value="ECO:0007669"/>
    <property type="project" value="Ensembl"/>
</dbReference>
<dbReference type="CDD" id="cd14721">
    <property type="entry name" value="bZIP_Fos"/>
    <property type="match status" value="1"/>
</dbReference>
<dbReference type="FunFam" id="1.20.5.170:FF:000006">
    <property type="entry name" value="fos-related antigen 2 isoform X1"/>
    <property type="match status" value="1"/>
</dbReference>
<dbReference type="Gene3D" id="1.20.5.170">
    <property type="match status" value="1"/>
</dbReference>
<dbReference type="InterPro" id="IPR000837">
    <property type="entry name" value="AP-1"/>
</dbReference>
<dbReference type="InterPro" id="IPR004827">
    <property type="entry name" value="bZIP"/>
</dbReference>
<dbReference type="InterPro" id="IPR046347">
    <property type="entry name" value="bZIP_sf"/>
</dbReference>
<dbReference type="PANTHER" id="PTHR23351">
    <property type="entry name" value="FOS TRANSCRIPTION FACTOR-RELATED"/>
    <property type="match status" value="1"/>
</dbReference>
<dbReference type="PANTHER" id="PTHR23351:SF4">
    <property type="entry name" value="PROTEIN C-FOS"/>
    <property type="match status" value="1"/>
</dbReference>
<dbReference type="Pfam" id="PF00170">
    <property type="entry name" value="bZIP_1"/>
    <property type="match status" value="1"/>
</dbReference>
<dbReference type="PRINTS" id="PR00042">
    <property type="entry name" value="LEUZIPPRFOS"/>
</dbReference>
<dbReference type="SMART" id="SM00338">
    <property type="entry name" value="BRLZ"/>
    <property type="match status" value="1"/>
</dbReference>
<dbReference type="SUPFAM" id="SSF57959">
    <property type="entry name" value="Leucine zipper domain"/>
    <property type="match status" value="1"/>
</dbReference>
<dbReference type="PROSITE" id="PS50217">
    <property type="entry name" value="BZIP"/>
    <property type="match status" value="1"/>
</dbReference>
<dbReference type="PROSITE" id="PS00036">
    <property type="entry name" value="BZIP_BASIC"/>
    <property type="match status" value="1"/>
</dbReference>